<dbReference type="EMBL" id="AAFI02000071">
    <property type="protein sequence ID" value="EAL65033.1"/>
    <property type="molecule type" value="Genomic_DNA"/>
</dbReference>
<dbReference type="RefSeq" id="XP_638390.1">
    <property type="nucleotide sequence ID" value="XM_633298.1"/>
</dbReference>
<dbReference type="FunCoup" id="Q54P68">
    <property type="interactions" value="20"/>
</dbReference>
<dbReference type="STRING" id="44689.Q54P68"/>
<dbReference type="GlyCosmos" id="Q54P68">
    <property type="glycosylation" value="7 sites, No reported glycans"/>
</dbReference>
<dbReference type="GlyGen" id="Q54P68">
    <property type="glycosylation" value="7 sites"/>
</dbReference>
<dbReference type="PaxDb" id="44689-DDB0231832"/>
<dbReference type="EnsemblProtists" id="EAL65033">
    <property type="protein sequence ID" value="EAL65033"/>
    <property type="gene ID" value="DDB_G0284761"/>
</dbReference>
<dbReference type="GeneID" id="8624759"/>
<dbReference type="KEGG" id="ddi:DDB_G0284761"/>
<dbReference type="dictyBase" id="DDB_G0284761">
    <property type="gene designation" value="fslA"/>
</dbReference>
<dbReference type="VEuPathDB" id="AmoebaDB:DDB_G0284761"/>
<dbReference type="eggNOG" id="ENOG502RCJA">
    <property type="taxonomic scope" value="Eukaryota"/>
</dbReference>
<dbReference type="HOGENOM" id="CLU_030318_0_0_1"/>
<dbReference type="InParanoid" id="Q54P68"/>
<dbReference type="OMA" id="WQNGVFW"/>
<dbReference type="PhylomeDB" id="Q54P68"/>
<dbReference type="PRO" id="PR:Q54P68"/>
<dbReference type="Proteomes" id="UP000002195">
    <property type="component" value="Chromosome 4"/>
</dbReference>
<dbReference type="GO" id="GO:0016020">
    <property type="term" value="C:membrane"/>
    <property type="evidence" value="ECO:0007669"/>
    <property type="project" value="UniProtKB-SubCell"/>
</dbReference>
<dbReference type="Gene3D" id="1.10.2000.10">
    <property type="entry name" value="Frizzled cysteine-rich domain"/>
    <property type="match status" value="1"/>
</dbReference>
<dbReference type="Gene3D" id="1.20.1070.10">
    <property type="entry name" value="Rhodopsin 7-helix transmembrane proteins"/>
    <property type="match status" value="1"/>
</dbReference>
<dbReference type="InterPro" id="IPR020067">
    <property type="entry name" value="Frizzled_dom"/>
</dbReference>
<dbReference type="InterPro" id="IPR036790">
    <property type="entry name" value="Frizzled_dom_sf"/>
</dbReference>
<dbReference type="InterPro" id="IPR050949">
    <property type="entry name" value="GPCR_Fz/Smo-like"/>
</dbReference>
<dbReference type="PANTHER" id="PTHR31787:SF2">
    <property type="entry name" value="FRIZZLED AND SMOOTHENED-LIKE PROTEIN A"/>
    <property type="match status" value="1"/>
</dbReference>
<dbReference type="PANTHER" id="PTHR31787">
    <property type="entry name" value="G-PROTEIN-COUPLED RECEPTOR GPCR FAMILY PROTEIN"/>
    <property type="match status" value="1"/>
</dbReference>
<dbReference type="PROSITE" id="PS50038">
    <property type="entry name" value="FZ"/>
    <property type="match status" value="1"/>
</dbReference>
<organism>
    <name type="scientific">Dictyostelium discoideum</name>
    <name type="common">Social amoeba</name>
    <dbReference type="NCBI Taxonomy" id="44689"/>
    <lineage>
        <taxon>Eukaryota</taxon>
        <taxon>Amoebozoa</taxon>
        <taxon>Evosea</taxon>
        <taxon>Eumycetozoa</taxon>
        <taxon>Dictyostelia</taxon>
        <taxon>Dictyosteliales</taxon>
        <taxon>Dictyosteliaceae</taxon>
        <taxon>Dictyostelium</taxon>
    </lineage>
</organism>
<evidence type="ECO:0000255" key="1"/>
<evidence type="ECO:0000255" key="2">
    <source>
        <dbReference type="PROSITE-ProRule" id="PRU00090"/>
    </source>
</evidence>
<evidence type="ECO:0000305" key="3"/>
<sequence length="594" mass="66964">MVDIRKSLFFIIFFIFYNYVNSQKAINSDAFCQKKTITSICDPYLFNTDSIYIFNSTTTQESIELEIKRLLGFFSMLPSTCQVPSTYRLICNQYFQTCVPISKTDNSSTIAIPLRPCRESCDYGNGICGTQSITPCTGTFTEPTIYKFPVTSNVFDLSSLGGPSNYDLQCLNIDTMKAGNLNGTYISNNETVIVNQTCVYPLVYRNSTNREDDIKKGYQYLTETSDCLLPCPVPFFTENEWYQFKDLTTVTGVISFVCIFFNIFIYGFLNKKHDRHTIGILCLSFSLWCCMLSDLIVASSPDYSLVCPEPGRFARIHDSRCVANGIIFQWGAVCTTMFWSAMAIDLYLVIKKLSLPAFTVKYFVAAIFTLALLFTTVPLAWDDYGYGFGGVGCWIMSNSVQNGCFWIPMLICLLIGAVSICLIIYEIVKVFKNVGRSGISIILANARLFGIVSFIFIEYIYLFVYHFWVQENTEKFTQNITDWVICVQTTGSSDGCPLPKAVPYATQFIFLFFLRLLGIEVCIFYGINSRSKNIILESDLVNNKYFKAIRSKISSVGATSTTKNNTSTNNTSDQFNTSMFSVEVSKNGGDDDDL</sequence>
<gene>
    <name type="primary">fslA</name>
    <name type="ORF">DDB_G0284761</name>
</gene>
<name>FSLA_DICDI</name>
<proteinExistence type="inferred from homology"/>
<comment type="subcellular location">
    <subcellularLocation>
        <location evidence="3">Membrane</location>
        <topology evidence="3">Multi-pass membrane protein</topology>
    </subcellularLocation>
</comment>
<comment type="similarity">
    <text evidence="3">Belongs to the G-protein coupled receptor Fz/Smo family.</text>
</comment>
<reference key="1">
    <citation type="journal article" date="2005" name="Nature">
        <title>The genome of the social amoeba Dictyostelium discoideum.</title>
        <authorList>
            <person name="Eichinger L."/>
            <person name="Pachebat J.A."/>
            <person name="Gloeckner G."/>
            <person name="Rajandream M.A."/>
            <person name="Sucgang R."/>
            <person name="Berriman M."/>
            <person name="Song J."/>
            <person name="Olsen R."/>
            <person name="Szafranski K."/>
            <person name="Xu Q."/>
            <person name="Tunggal B."/>
            <person name="Kummerfeld S."/>
            <person name="Madera M."/>
            <person name="Konfortov B.A."/>
            <person name="Rivero F."/>
            <person name="Bankier A.T."/>
            <person name="Lehmann R."/>
            <person name="Hamlin N."/>
            <person name="Davies R."/>
            <person name="Gaudet P."/>
            <person name="Fey P."/>
            <person name="Pilcher K."/>
            <person name="Chen G."/>
            <person name="Saunders D."/>
            <person name="Sodergren E.J."/>
            <person name="Davis P."/>
            <person name="Kerhornou A."/>
            <person name="Nie X."/>
            <person name="Hall N."/>
            <person name="Anjard C."/>
            <person name="Hemphill L."/>
            <person name="Bason N."/>
            <person name="Farbrother P."/>
            <person name="Desany B."/>
            <person name="Just E."/>
            <person name="Morio T."/>
            <person name="Rost R."/>
            <person name="Churcher C.M."/>
            <person name="Cooper J."/>
            <person name="Haydock S."/>
            <person name="van Driessche N."/>
            <person name="Cronin A."/>
            <person name="Goodhead I."/>
            <person name="Muzny D.M."/>
            <person name="Mourier T."/>
            <person name="Pain A."/>
            <person name="Lu M."/>
            <person name="Harper D."/>
            <person name="Lindsay R."/>
            <person name="Hauser H."/>
            <person name="James K.D."/>
            <person name="Quiles M."/>
            <person name="Madan Babu M."/>
            <person name="Saito T."/>
            <person name="Buchrieser C."/>
            <person name="Wardroper A."/>
            <person name="Felder M."/>
            <person name="Thangavelu M."/>
            <person name="Johnson D."/>
            <person name="Knights A."/>
            <person name="Loulseged H."/>
            <person name="Mungall K.L."/>
            <person name="Oliver K."/>
            <person name="Price C."/>
            <person name="Quail M.A."/>
            <person name="Urushihara H."/>
            <person name="Hernandez J."/>
            <person name="Rabbinowitsch E."/>
            <person name="Steffen D."/>
            <person name="Sanders M."/>
            <person name="Ma J."/>
            <person name="Kohara Y."/>
            <person name="Sharp S."/>
            <person name="Simmonds M.N."/>
            <person name="Spiegler S."/>
            <person name="Tivey A."/>
            <person name="Sugano S."/>
            <person name="White B."/>
            <person name="Walker D."/>
            <person name="Woodward J.R."/>
            <person name="Winckler T."/>
            <person name="Tanaka Y."/>
            <person name="Shaulsky G."/>
            <person name="Schleicher M."/>
            <person name="Weinstock G.M."/>
            <person name="Rosenthal A."/>
            <person name="Cox E.C."/>
            <person name="Chisholm R.L."/>
            <person name="Gibbs R.A."/>
            <person name="Loomis W.F."/>
            <person name="Platzer M."/>
            <person name="Kay R.R."/>
            <person name="Williams J.G."/>
            <person name="Dear P.H."/>
            <person name="Noegel A.A."/>
            <person name="Barrell B.G."/>
            <person name="Kuspa A."/>
        </authorList>
    </citation>
    <scope>NUCLEOTIDE SEQUENCE [LARGE SCALE GENOMIC DNA]</scope>
    <source>
        <strain>AX4</strain>
    </source>
</reference>
<reference key="2">
    <citation type="journal article" date="2006" name="Eur. J. Cell Biol.">
        <title>The Dictyostelium repertoire of seven transmembrane domain receptors.</title>
        <authorList>
            <person name="Prabhu Y."/>
            <person name="Eichinger L."/>
        </authorList>
    </citation>
    <scope>NOMENCLATURE</scope>
</reference>
<protein>
    <recommendedName>
        <fullName>Frizzled and smoothened-like protein A</fullName>
    </recommendedName>
</protein>
<feature type="signal peptide" evidence="1">
    <location>
        <begin position="1"/>
        <end position="22"/>
    </location>
</feature>
<feature type="chain" id="PRO_0000371363" description="Frizzled and smoothened-like protein A">
    <location>
        <begin position="23"/>
        <end position="594"/>
    </location>
</feature>
<feature type="topological domain" description="Extracellular" evidence="1">
    <location>
        <begin position="23"/>
        <end position="248"/>
    </location>
</feature>
<feature type="transmembrane region" description="Helical; Name=1" evidence="1">
    <location>
        <begin position="249"/>
        <end position="269"/>
    </location>
</feature>
<feature type="topological domain" description="Cytoplasmic" evidence="1">
    <location>
        <begin position="270"/>
        <end position="277"/>
    </location>
</feature>
<feature type="transmembrane region" description="Helical; Name=2" evidence="1">
    <location>
        <begin position="278"/>
        <end position="298"/>
    </location>
</feature>
<feature type="topological domain" description="Extracellular" evidence="1">
    <location>
        <begin position="299"/>
        <end position="329"/>
    </location>
</feature>
<feature type="transmembrane region" description="Helical; Name=3" evidence="1">
    <location>
        <begin position="330"/>
        <end position="350"/>
    </location>
</feature>
<feature type="topological domain" description="Cytoplasmic" evidence="1">
    <location>
        <begin position="351"/>
        <end position="361"/>
    </location>
</feature>
<feature type="transmembrane region" description="Helical; Name=4" evidence="1">
    <location>
        <begin position="362"/>
        <end position="382"/>
    </location>
</feature>
<feature type="topological domain" description="Extracellular" evidence="1">
    <location>
        <begin position="383"/>
        <end position="403"/>
    </location>
</feature>
<feature type="transmembrane region" description="Helical; Name=5" evidence="1">
    <location>
        <begin position="404"/>
        <end position="424"/>
    </location>
</feature>
<feature type="topological domain" description="Cytoplasmic" evidence="1">
    <location>
        <begin position="425"/>
        <end position="448"/>
    </location>
</feature>
<feature type="transmembrane region" description="Helical; Name=6" evidence="1">
    <location>
        <begin position="449"/>
        <end position="469"/>
    </location>
</feature>
<feature type="topological domain" description="Extracellular" evidence="1">
    <location>
        <begin position="470"/>
        <end position="507"/>
    </location>
</feature>
<feature type="transmembrane region" description="Helical; Name=7" evidence="1">
    <location>
        <begin position="508"/>
        <end position="528"/>
    </location>
</feature>
<feature type="topological domain" description="Cytoplasmic" evidence="1">
    <location>
        <begin position="529"/>
        <end position="594"/>
    </location>
</feature>
<feature type="domain" description="FZ" evidence="2">
    <location>
        <begin position="27"/>
        <end position="173"/>
    </location>
</feature>
<feature type="glycosylation site" description="N-linked (GlcNAc...) asparagine" evidence="1">
    <location>
        <position position="55"/>
    </location>
</feature>
<feature type="glycosylation site" description="N-linked (GlcNAc...) asparagine" evidence="1">
    <location>
        <position position="106"/>
    </location>
</feature>
<feature type="glycosylation site" description="N-linked (GlcNAc...) asparagine" evidence="1">
    <location>
        <position position="182"/>
    </location>
</feature>
<feature type="glycosylation site" description="N-linked (GlcNAc...) asparagine" evidence="1">
    <location>
        <position position="189"/>
    </location>
</feature>
<feature type="glycosylation site" description="N-linked (GlcNAc...) asparagine" evidence="1">
    <location>
        <position position="195"/>
    </location>
</feature>
<feature type="glycosylation site" description="N-linked (GlcNAc...) asparagine" evidence="1">
    <location>
        <position position="206"/>
    </location>
</feature>
<feature type="glycosylation site" description="N-linked (GlcNAc...) asparagine" evidence="1">
    <location>
        <position position="479"/>
    </location>
</feature>
<feature type="disulfide bond" evidence="2">
    <location>
        <begin position="32"/>
        <end position="98"/>
    </location>
</feature>
<feature type="disulfide bond" evidence="2">
    <location>
        <begin position="41"/>
        <end position="91"/>
    </location>
</feature>
<feature type="disulfide bond" evidence="2">
    <location>
        <begin position="117"/>
        <end position="170"/>
    </location>
</feature>
<accession>Q54P68</accession>
<keyword id="KW-1015">Disulfide bond</keyword>
<keyword id="KW-0325">Glycoprotein</keyword>
<keyword id="KW-0472">Membrane</keyword>
<keyword id="KW-0675">Receptor</keyword>
<keyword id="KW-1185">Reference proteome</keyword>
<keyword id="KW-0732">Signal</keyword>
<keyword id="KW-0812">Transmembrane</keyword>
<keyword id="KW-1133">Transmembrane helix</keyword>